<gene>
    <name evidence="1" type="primary">rpsC</name>
    <name type="ordered locus">Rsph17025_2528</name>
</gene>
<organism>
    <name type="scientific">Cereibacter sphaeroides (strain ATCC 17025 / ATH 2.4.3)</name>
    <name type="common">Rhodobacter sphaeroides</name>
    <dbReference type="NCBI Taxonomy" id="349102"/>
    <lineage>
        <taxon>Bacteria</taxon>
        <taxon>Pseudomonadati</taxon>
        <taxon>Pseudomonadota</taxon>
        <taxon>Alphaproteobacteria</taxon>
        <taxon>Rhodobacterales</taxon>
        <taxon>Paracoccaceae</taxon>
        <taxon>Cereibacter</taxon>
    </lineage>
</organism>
<comment type="function">
    <text evidence="1">Binds the lower part of the 30S subunit head. Binds mRNA in the 70S ribosome, positioning it for translation.</text>
</comment>
<comment type="subunit">
    <text evidence="1">Part of the 30S ribosomal subunit. Forms a tight complex with proteins S10 and S14.</text>
</comment>
<comment type="similarity">
    <text evidence="1">Belongs to the universal ribosomal protein uS3 family.</text>
</comment>
<sequence>MGQKVNPIGMRLQVNRTWDSRWFAESKDYGNLLLEDLKMREFIHDYAKQAGVSKVIIERPHRKCRVTIHTARPGVIIGKKGADIETLRKKLAAFTKSELHLNIVEIRKPELDAQLVAESIAQQMERRVSFRRAMKRGVQNAMRIGALGIRVNVAGRLGGAEIARTEWYREGRVPLHTLRADIDYATSEASTPYGIIGVKVWIFKGEILEHDPQAHDRRHSEAQEGAAPRPPRRDRERA</sequence>
<protein>
    <recommendedName>
        <fullName evidence="1">Small ribosomal subunit protein uS3</fullName>
    </recommendedName>
    <alternativeName>
        <fullName evidence="3">30S ribosomal protein S3</fullName>
    </alternativeName>
</protein>
<dbReference type="EMBL" id="CP000661">
    <property type="protein sequence ID" value="ABP71416.1"/>
    <property type="molecule type" value="Genomic_DNA"/>
</dbReference>
<dbReference type="SMR" id="A4WVK2"/>
<dbReference type="STRING" id="349102.Rsph17025_2528"/>
<dbReference type="KEGG" id="rsq:Rsph17025_2528"/>
<dbReference type="eggNOG" id="COG0092">
    <property type="taxonomic scope" value="Bacteria"/>
</dbReference>
<dbReference type="HOGENOM" id="CLU_058591_0_2_5"/>
<dbReference type="BioCyc" id="RSPH349102:G1G8M-2606-MONOMER"/>
<dbReference type="GO" id="GO:0022627">
    <property type="term" value="C:cytosolic small ribosomal subunit"/>
    <property type="evidence" value="ECO:0007669"/>
    <property type="project" value="TreeGrafter"/>
</dbReference>
<dbReference type="GO" id="GO:0003729">
    <property type="term" value="F:mRNA binding"/>
    <property type="evidence" value="ECO:0007669"/>
    <property type="project" value="UniProtKB-UniRule"/>
</dbReference>
<dbReference type="GO" id="GO:0019843">
    <property type="term" value="F:rRNA binding"/>
    <property type="evidence" value="ECO:0007669"/>
    <property type="project" value="UniProtKB-UniRule"/>
</dbReference>
<dbReference type="GO" id="GO:0003735">
    <property type="term" value="F:structural constituent of ribosome"/>
    <property type="evidence" value="ECO:0007669"/>
    <property type="project" value="InterPro"/>
</dbReference>
<dbReference type="GO" id="GO:0006412">
    <property type="term" value="P:translation"/>
    <property type="evidence" value="ECO:0007669"/>
    <property type="project" value="UniProtKB-UniRule"/>
</dbReference>
<dbReference type="CDD" id="cd02412">
    <property type="entry name" value="KH-II_30S_S3"/>
    <property type="match status" value="1"/>
</dbReference>
<dbReference type="FunFam" id="3.30.1140.32:FF:000001">
    <property type="entry name" value="30S ribosomal protein S3"/>
    <property type="match status" value="1"/>
</dbReference>
<dbReference type="FunFam" id="3.30.300.20:FF:000001">
    <property type="entry name" value="30S ribosomal protein S3"/>
    <property type="match status" value="1"/>
</dbReference>
<dbReference type="Gene3D" id="3.30.300.20">
    <property type="match status" value="1"/>
</dbReference>
<dbReference type="Gene3D" id="3.30.1140.32">
    <property type="entry name" value="Ribosomal protein S3, C-terminal domain"/>
    <property type="match status" value="1"/>
</dbReference>
<dbReference type="HAMAP" id="MF_01309_B">
    <property type="entry name" value="Ribosomal_uS3_B"/>
    <property type="match status" value="1"/>
</dbReference>
<dbReference type="InterPro" id="IPR004087">
    <property type="entry name" value="KH_dom"/>
</dbReference>
<dbReference type="InterPro" id="IPR015946">
    <property type="entry name" value="KH_dom-like_a/b"/>
</dbReference>
<dbReference type="InterPro" id="IPR004044">
    <property type="entry name" value="KH_dom_type_2"/>
</dbReference>
<dbReference type="InterPro" id="IPR009019">
    <property type="entry name" value="KH_sf_prok-type"/>
</dbReference>
<dbReference type="InterPro" id="IPR036419">
    <property type="entry name" value="Ribosomal_S3_C_sf"/>
</dbReference>
<dbReference type="InterPro" id="IPR005704">
    <property type="entry name" value="Ribosomal_uS3_bac-typ"/>
</dbReference>
<dbReference type="InterPro" id="IPR001351">
    <property type="entry name" value="Ribosomal_uS3_C"/>
</dbReference>
<dbReference type="InterPro" id="IPR018280">
    <property type="entry name" value="Ribosomal_uS3_CS"/>
</dbReference>
<dbReference type="NCBIfam" id="TIGR01009">
    <property type="entry name" value="rpsC_bact"/>
    <property type="match status" value="1"/>
</dbReference>
<dbReference type="PANTHER" id="PTHR11760">
    <property type="entry name" value="30S/40S RIBOSOMAL PROTEIN S3"/>
    <property type="match status" value="1"/>
</dbReference>
<dbReference type="PANTHER" id="PTHR11760:SF19">
    <property type="entry name" value="SMALL RIBOSOMAL SUBUNIT PROTEIN US3C"/>
    <property type="match status" value="1"/>
</dbReference>
<dbReference type="Pfam" id="PF07650">
    <property type="entry name" value="KH_2"/>
    <property type="match status" value="1"/>
</dbReference>
<dbReference type="Pfam" id="PF00189">
    <property type="entry name" value="Ribosomal_S3_C"/>
    <property type="match status" value="1"/>
</dbReference>
<dbReference type="SMART" id="SM00322">
    <property type="entry name" value="KH"/>
    <property type="match status" value="1"/>
</dbReference>
<dbReference type="SUPFAM" id="SSF54814">
    <property type="entry name" value="Prokaryotic type KH domain (KH-domain type II)"/>
    <property type="match status" value="1"/>
</dbReference>
<dbReference type="SUPFAM" id="SSF54821">
    <property type="entry name" value="Ribosomal protein S3 C-terminal domain"/>
    <property type="match status" value="1"/>
</dbReference>
<dbReference type="PROSITE" id="PS50823">
    <property type="entry name" value="KH_TYPE_2"/>
    <property type="match status" value="1"/>
</dbReference>
<dbReference type="PROSITE" id="PS00548">
    <property type="entry name" value="RIBOSOMAL_S3"/>
    <property type="match status" value="1"/>
</dbReference>
<accession>A4WVK2</accession>
<keyword id="KW-0687">Ribonucleoprotein</keyword>
<keyword id="KW-0689">Ribosomal protein</keyword>
<keyword id="KW-0694">RNA-binding</keyword>
<keyword id="KW-0699">rRNA-binding</keyword>
<reference key="1">
    <citation type="submission" date="2007-04" db="EMBL/GenBank/DDBJ databases">
        <title>Complete sequence of chromosome of Rhodobacter sphaeroides ATCC 17025.</title>
        <authorList>
            <consortium name="US DOE Joint Genome Institute"/>
            <person name="Copeland A."/>
            <person name="Lucas S."/>
            <person name="Lapidus A."/>
            <person name="Barry K."/>
            <person name="Detter J.C."/>
            <person name="Glavina del Rio T."/>
            <person name="Hammon N."/>
            <person name="Israni S."/>
            <person name="Dalin E."/>
            <person name="Tice H."/>
            <person name="Pitluck S."/>
            <person name="Chertkov O."/>
            <person name="Brettin T."/>
            <person name="Bruce D."/>
            <person name="Han C."/>
            <person name="Schmutz J."/>
            <person name="Larimer F."/>
            <person name="Land M."/>
            <person name="Hauser L."/>
            <person name="Kyrpides N."/>
            <person name="Kim E."/>
            <person name="Richardson P."/>
            <person name="Mackenzie C."/>
            <person name="Choudhary M."/>
            <person name="Donohue T.J."/>
            <person name="Kaplan S."/>
        </authorList>
    </citation>
    <scope>NUCLEOTIDE SEQUENCE [LARGE SCALE GENOMIC DNA]</scope>
    <source>
        <strain>ATCC 17025 / ATH 2.4.3</strain>
    </source>
</reference>
<evidence type="ECO:0000255" key="1">
    <source>
        <dbReference type="HAMAP-Rule" id="MF_01309"/>
    </source>
</evidence>
<evidence type="ECO:0000256" key="2">
    <source>
        <dbReference type="SAM" id="MobiDB-lite"/>
    </source>
</evidence>
<evidence type="ECO:0000305" key="3"/>
<proteinExistence type="inferred from homology"/>
<name>RS3_CERS5</name>
<feature type="chain" id="PRO_1000086146" description="Small ribosomal subunit protein uS3">
    <location>
        <begin position="1"/>
        <end position="238"/>
    </location>
</feature>
<feature type="domain" description="KH type-2" evidence="1">
    <location>
        <begin position="39"/>
        <end position="107"/>
    </location>
</feature>
<feature type="region of interest" description="Disordered" evidence="2">
    <location>
        <begin position="212"/>
        <end position="238"/>
    </location>
</feature>
<feature type="compositionally biased region" description="Basic and acidic residues" evidence="2">
    <location>
        <begin position="212"/>
        <end position="222"/>
    </location>
</feature>